<proteinExistence type="evidence at transcript level"/>
<organism>
    <name type="scientific">Vaccinia virus (strain Ankara)</name>
    <name type="common">VACV</name>
    <dbReference type="NCBI Taxonomy" id="126794"/>
    <lineage>
        <taxon>Viruses</taxon>
        <taxon>Varidnaviria</taxon>
        <taxon>Bamfordvirae</taxon>
        <taxon>Nucleocytoviricota</taxon>
        <taxon>Pokkesviricetes</taxon>
        <taxon>Chitovirales</taxon>
        <taxon>Poxviridae</taxon>
        <taxon>Chordopoxvirinae</taxon>
        <taxon>Orthopoxvirus</taxon>
        <taxon>Vaccinia virus</taxon>
    </lineage>
</organism>
<evidence type="ECO:0000250" key="1">
    <source>
        <dbReference type="UniProtKB" id="P08586"/>
    </source>
</evidence>
<evidence type="ECO:0000255" key="2"/>
<evidence type="ECO:0000305" key="3"/>
<keyword id="KW-1035">Host cytoplasm</keyword>
<keyword id="KW-1043">Host membrane</keyword>
<keyword id="KW-0426">Late protein</keyword>
<keyword id="KW-0472">Membrane</keyword>
<keyword id="KW-0812">Transmembrane</keyword>
<keyword id="KW-1133">Transmembrane helix</keyword>
<organismHost>
    <name type="scientific">Homo sapiens</name>
    <name type="common">Human</name>
    <dbReference type="NCBI Taxonomy" id="9606"/>
</organismHost>
<comment type="function">
    <text evidence="1">Contributes to the formation of crescents and immature virions (IV). Interacts with phosphatidylinositol-3-phosphate (PI3P) and phosphatidylinositol-4-phosphate (PI4P) lipids in order to form virion membranes. Mechanistically, mediates proper formation of OPG125-hexamers, and hence the honey comb lattice and spherical immature virus.</text>
</comment>
<comment type="subcellular location">
    <subcellularLocation>
        <location evidence="1">Host membrane</location>
        <topology evidence="1">Single-pass membrane protein</topology>
    </subcellularLocation>
    <subcellularLocation>
        <location evidence="1">Host cytoplasm</location>
    </subcellularLocation>
    <text evidence="1">Probably transitorily part of the membrane of crescents during immature virions formation. Not incorporated into virions. Probably synthesized, but not retained in viral factories.</text>
</comment>
<comment type="induction">
    <text>Expressed in the late phase of the viral replicative cycle.</text>
</comment>
<comment type="similarity">
    <text evidence="3">Belongs to the orthopoxvirus OPG112 family.</text>
</comment>
<protein>
    <recommendedName>
        <fullName>Late protein OPG112</fullName>
    </recommendedName>
</protein>
<reference key="1">
    <citation type="journal article" date="1998" name="Virology">
        <title>The complete genomic sequence of the modified vaccinia Ankara strain: comparison with other orthopoxviruses.</title>
        <authorList>
            <person name="Antoine G."/>
            <person name="Scheiflinger F."/>
            <person name="Dorner F."/>
            <person name="Falkner F.G."/>
        </authorList>
    </citation>
    <scope>NUCLEOTIDE SEQUENCE [LARGE SCALE GENOMIC DNA]</scope>
</reference>
<reference key="2">
    <citation type="submission" date="2004-04" db="EMBL/GenBank/DDBJ databases">
        <authorList>
            <person name="Esposito J.J."/>
            <person name="Frace M."/>
            <person name="Sammons S.A."/>
            <person name="Olsen-Rasmussen M.S."/>
            <person name="Osborne J."/>
            <person name="Khristova M."/>
            <person name="Wohlhueter R.M."/>
        </authorList>
    </citation>
    <scope>NUCLEOTIDE SEQUENCE [LARGE SCALE GENOMIC DNA]</scope>
    <source>
        <strain>Isolate Acambis 3000</strain>
    </source>
</reference>
<accession>O57208</accession>
<sequence length="146" mass="16959">MEMDKRMKSLAMTAFFGELNTLDIMALIMSIFKRHPNNTIFSVDKDGQFMIDFEYDNYKASQYLDLTLTPISGDECKTHASSIAEQLACVDIIKEDISEYIKTTPRLKRFIKKYRNRSDTRISRDTEKLKIALAKGIDYEYIKDAC</sequence>
<feature type="chain" id="PRO_0000099550" description="Late protein OPG112">
    <location>
        <begin position="1"/>
        <end position="146"/>
    </location>
</feature>
<feature type="transmembrane region" description="Helical" evidence="2">
    <location>
        <begin position="10"/>
        <end position="32"/>
    </location>
</feature>
<gene>
    <name type="primary">OPG112</name>
    <name type="ordered locus">MVA097R</name>
    <name type="ordered locus">ACAM3000_MVA_097</name>
    <name type="ORF">H7R</name>
</gene>
<dbReference type="EMBL" id="U94848">
    <property type="protein sequence ID" value="AAB96510.1"/>
    <property type="molecule type" value="Genomic_DNA"/>
</dbReference>
<dbReference type="EMBL" id="AY603355">
    <property type="protein sequence ID" value="AAT10495.1"/>
    <property type="molecule type" value="Genomic_DNA"/>
</dbReference>
<dbReference type="PIR" id="T37373">
    <property type="entry name" value="T37373"/>
</dbReference>
<dbReference type="SMR" id="O57208"/>
<dbReference type="Proteomes" id="UP000159908">
    <property type="component" value="Segment"/>
</dbReference>
<dbReference type="Proteomes" id="UP000172909">
    <property type="component" value="Segment"/>
</dbReference>
<dbReference type="GO" id="GO:0030430">
    <property type="term" value="C:host cell cytoplasm"/>
    <property type="evidence" value="ECO:0007669"/>
    <property type="project" value="UniProtKB-SubCell"/>
</dbReference>
<dbReference type="GO" id="GO:0033644">
    <property type="term" value="C:host cell membrane"/>
    <property type="evidence" value="ECO:0007669"/>
    <property type="project" value="UniProtKB-SubCell"/>
</dbReference>
<dbReference type="GO" id="GO:0016020">
    <property type="term" value="C:membrane"/>
    <property type="evidence" value="ECO:0007669"/>
    <property type="project" value="UniProtKB-KW"/>
</dbReference>
<dbReference type="InterPro" id="IPR006872">
    <property type="entry name" value="Poxvirus_H7"/>
</dbReference>
<dbReference type="Pfam" id="PF04787">
    <property type="entry name" value="Pox_H7"/>
    <property type="match status" value="1"/>
</dbReference>
<name>PG112_VACCA</name>